<accession>Q8KEA8</accession>
<proteinExistence type="inferred from homology"/>
<evidence type="ECO:0000250" key="1"/>
<evidence type="ECO:0000255" key="2">
    <source>
        <dbReference type="HAMAP-Rule" id="MF_00223"/>
    </source>
</evidence>
<evidence type="ECO:0000256" key="3">
    <source>
        <dbReference type="SAM" id="MobiDB-lite"/>
    </source>
</evidence>
<comment type="catalytic activity">
    <reaction evidence="2">
        <text>GTP + H2O = 7,8-dihydroneopterin 3'-triphosphate + formate + H(+)</text>
        <dbReference type="Rhea" id="RHEA:17473"/>
        <dbReference type="ChEBI" id="CHEBI:15377"/>
        <dbReference type="ChEBI" id="CHEBI:15378"/>
        <dbReference type="ChEBI" id="CHEBI:15740"/>
        <dbReference type="ChEBI" id="CHEBI:37565"/>
        <dbReference type="ChEBI" id="CHEBI:58462"/>
        <dbReference type="EC" id="3.5.4.16"/>
    </reaction>
</comment>
<comment type="pathway">
    <text evidence="2">Cofactor biosynthesis; 7,8-dihydroneopterin triphosphate biosynthesis; 7,8-dihydroneopterin triphosphate from GTP: step 1/1.</text>
</comment>
<comment type="subunit">
    <text evidence="1">Toroid-shaped homodecamer, composed of two pentamers of five dimers.</text>
</comment>
<comment type="similarity">
    <text evidence="2">Belongs to the GTP cyclohydrolase I family.</text>
</comment>
<name>GCH1_CHLTE</name>
<reference key="1">
    <citation type="journal article" date="2002" name="Proc. Natl. Acad. Sci. U.S.A.">
        <title>The complete genome sequence of Chlorobium tepidum TLS, a photosynthetic, anaerobic, green-sulfur bacterium.</title>
        <authorList>
            <person name="Eisen J.A."/>
            <person name="Nelson K.E."/>
            <person name="Paulsen I.T."/>
            <person name="Heidelberg J.F."/>
            <person name="Wu M."/>
            <person name="Dodson R.J."/>
            <person name="DeBoy R.T."/>
            <person name="Gwinn M.L."/>
            <person name="Nelson W.C."/>
            <person name="Haft D.H."/>
            <person name="Hickey E.K."/>
            <person name="Peterson J.D."/>
            <person name="Durkin A.S."/>
            <person name="Kolonay J.F."/>
            <person name="Yang F."/>
            <person name="Holt I.E."/>
            <person name="Umayam L.A."/>
            <person name="Mason T.M."/>
            <person name="Brenner M."/>
            <person name="Shea T.P."/>
            <person name="Parksey D.S."/>
            <person name="Nierman W.C."/>
            <person name="Feldblyum T.V."/>
            <person name="Hansen C.L."/>
            <person name="Craven M.B."/>
            <person name="Radune D."/>
            <person name="Vamathevan J.J."/>
            <person name="Khouri H.M."/>
            <person name="White O."/>
            <person name="Gruber T.M."/>
            <person name="Ketchum K.A."/>
            <person name="Venter J.C."/>
            <person name="Tettelin H."/>
            <person name="Bryant D.A."/>
            <person name="Fraser C.M."/>
        </authorList>
    </citation>
    <scope>NUCLEOTIDE SEQUENCE [LARGE SCALE GENOMIC DNA]</scope>
    <source>
        <strain>ATCC 49652 / DSM 12025 / NBRC 103806 / TLS</strain>
    </source>
</reference>
<protein>
    <recommendedName>
        <fullName evidence="2">GTP cyclohydrolase 1</fullName>
        <ecNumber evidence="2">3.5.4.16</ecNumber>
    </recommendedName>
    <alternativeName>
        <fullName evidence="2">GTP cyclohydrolase I</fullName>
        <shortName evidence="2">GTP-CH-I</shortName>
    </alternativeName>
</protein>
<gene>
    <name evidence="2" type="primary">folE</name>
    <name type="ordered locus">CT0781</name>
</gene>
<dbReference type="EC" id="3.5.4.16" evidence="2"/>
<dbReference type="EMBL" id="AE006470">
    <property type="protein sequence ID" value="AAM72018.1"/>
    <property type="molecule type" value="Genomic_DNA"/>
</dbReference>
<dbReference type="RefSeq" id="NP_661676.1">
    <property type="nucleotide sequence ID" value="NC_002932.3"/>
</dbReference>
<dbReference type="RefSeq" id="WP_010932463.1">
    <property type="nucleotide sequence ID" value="NC_002932.3"/>
</dbReference>
<dbReference type="SMR" id="Q8KEA8"/>
<dbReference type="STRING" id="194439.CT0781"/>
<dbReference type="EnsemblBacteria" id="AAM72018">
    <property type="protein sequence ID" value="AAM72018"/>
    <property type="gene ID" value="CT0781"/>
</dbReference>
<dbReference type="KEGG" id="cte:CT0781"/>
<dbReference type="PATRIC" id="fig|194439.7.peg.711"/>
<dbReference type="eggNOG" id="COG0302">
    <property type="taxonomic scope" value="Bacteria"/>
</dbReference>
<dbReference type="HOGENOM" id="CLU_049768_3_2_10"/>
<dbReference type="OrthoDB" id="9801207at2"/>
<dbReference type="UniPathway" id="UPA00848">
    <property type="reaction ID" value="UER00151"/>
</dbReference>
<dbReference type="Proteomes" id="UP000001007">
    <property type="component" value="Chromosome"/>
</dbReference>
<dbReference type="GO" id="GO:0005737">
    <property type="term" value="C:cytoplasm"/>
    <property type="evidence" value="ECO:0007669"/>
    <property type="project" value="TreeGrafter"/>
</dbReference>
<dbReference type="GO" id="GO:0005525">
    <property type="term" value="F:GTP binding"/>
    <property type="evidence" value="ECO:0007669"/>
    <property type="project" value="UniProtKB-KW"/>
</dbReference>
<dbReference type="GO" id="GO:0003934">
    <property type="term" value="F:GTP cyclohydrolase I activity"/>
    <property type="evidence" value="ECO:0007669"/>
    <property type="project" value="UniProtKB-UniRule"/>
</dbReference>
<dbReference type="GO" id="GO:0008270">
    <property type="term" value="F:zinc ion binding"/>
    <property type="evidence" value="ECO:0007669"/>
    <property type="project" value="UniProtKB-UniRule"/>
</dbReference>
<dbReference type="GO" id="GO:0006730">
    <property type="term" value="P:one-carbon metabolic process"/>
    <property type="evidence" value="ECO:0007669"/>
    <property type="project" value="UniProtKB-UniRule"/>
</dbReference>
<dbReference type="GO" id="GO:0006729">
    <property type="term" value="P:tetrahydrobiopterin biosynthetic process"/>
    <property type="evidence" value="ECO:0007669"/>
    <property type="project" value="TreeGrafter"/>
</dbReference>
<dbReference type="GO" id="GO:0046654">
    <property type="term" value="P:tetrahydrofolate biosynthetic process"/>
    <property type="evidence" value="ECO:0007669"/>
    <property type="project" value="UniProtKB-UniRule"/>
</dbReference>
<dbReference type="CDD" id="cd00642">
    <property type="entry name" value="GTP_cyclohydro1"/>
    <property type="match status" value="1"/>
</dbReference>
<dbReference type="FunFam" id="3.30.1130.10:FF:000001">
    <property type="entry name" value="GTP cyclohydrolase 1"/>
    <property type="match status" value="1"/>
</dbReference>
<dbReference type="Gene3D" id="1.10.286.10">
    <property type="match status" value="1"/>
</dbReference>
<dbReference type="Gene3D" id="3.30.1130.10">
    <property type="match status" value="1"/>
</dbReference>
<dbReference type="HAMAP" id="MF_00223">
    <property type="entry name" value="FolE"/>
    <property type="match status" value="1"/>
</dbReference>
<dbReference type="InterPro" id="IPR043133">
    <property type="entry name" value="GTP-CH-I_C/QueF"/>
</dbReference>
<dbReference type="InterPro" id="IPR043134">
    <property type="entry name" value="GTP-CH-I_N"/>
</dbReference>
<dbReference type="InterPro" id="IPR001474">
    <property type="entry name" value="GTP_CycHdrlase_I"/>
</dbReference>
<dbReference type="InterPro" id="IPR018234">
    <property type="entry name" value="GTP_CycHdrlase_I_CS"/>
</dbReference>
<dbReference type="InterPro" id="IPR020602">
    <property type="entry name" value="GTP_CycHdrlase_I_dom"/>
</dbReference>
<dbReference type="NCBIfam" id="TIGR00063">
    <property type="entry name" value="folE"/>
    <property type="match status" value="1"/>
</dbReference>
<dbReference type="NCBIfam" id="NF006825">
    <property type="entry name" value="PRK09347.1-2"/>
    <property type="match status" value="1"/>
</dbReference>
<dbReference type="NCBIfam" id="NF006826">
    <property type="entry name" value="PRK09347.1-3"/>
    <property type="match status" value="1"/>
</dbReference>
<dbReference type="PANTHER" id="PTHR11109:SF7">
    <property type="entry name" value="GTP CYCLOHYDROLASE 1"/>
    <property type="match status" value="1"/>
</dbReference>
<dbReference type="PANTHER" id="PTHR11109">
    <property type="entry name" value="GTP CYCLOHYDROLASE I"/>
    <property type="match status" value="1"/>
</dbReference>
<dbReference type="Pfam" id="PF01227">
    <property type="entry name" value="GTP_cyclohydroI"/>
    <property type="match status" value="1"/>
</dbReference>
<dbReference type="SUPFAM" id="SSF55620">
    <property type="entry name" value="Tetrahydrobiopterin biosynthesis enzymes-like"/>
    <property type="match status" value="1"/>
</dbReference>
<dbReference type="PROSITE" id="PS00859">
    <property type="entry name" value="GTP_CYCLOHYDROL_1_1"/>
    <property type="match status" value="1"/>
</dbReference>
<dbReference type="PROSITE" id="PS00860">
    <property type="entry name" value="GTP_CYCLOHYDROL_1_2"/>
    <property type="match status" value="1"/>
</dbReference>
<keyword id="KW-0342">GTP-binding</keyword>
<keyword id="KW-0378">Hydrolase</keyword>
<keyword id="KW-0479">Metal-binding</keyword>
<keyword id="KW-0547">Nucleotide-binding</keyword>
<keyword id="KW-0554">One-carbon metabolism</keyword>
<keyword id="KW-1185">Reference proteome</keyword>
<keyword id="KW-0862">Zinc</keyword>
<sequence length="224" mass="25368">MKQEKTVSPTVENNRSAESRLSQCDLDECFDESHDRDEEVLGSMTDAVYSLLKGVGEDPEREGLLLTPERVAKSLRFLTKGYRQDPEQLLKKAVFTESYDEMVLVKDIDIYSMCEHHMLPFFGKAHVAYIPDGKIVGLSKIPRVVEVFARRLQVQERLTQQIRDAIQNVLNPRGVAVVIEATHMCMVMRGVEKQNAVTTTSAMSGDFMTSQSTRSEFLRLIGNH</sequence>
<feature type="chain" id="PRO_0000119396" description="GTP cyclohydrolase 1">
    <location>
        <begin position="1"/>
        <end position="224"/>
    </location>
</feature>
<feature type="region of interest" description="Disordered" evidence="3">
    <location>
        <begin position="1"/>
        <end position="20"/>
    </location>
</feature>
<feature type="binding site" evidence="2">
    <location>
        <position position="114"/>
    </location>
    <ligand>
        <name>Zn(2+)</name>
        <dbReference type="ChEBI" id="CHEBI:29105"/>
    </ligand>
</feature>
<feature type="binding site" evidence="2">
    <location>
        <position position="117"/>
    </location>
    <ligand>
        <name>Zn(2+)</name>
        <dbReference type="ChEBI" id="CHEBI:29105"/>
    </ligand>
</feature>
<feature type="binding site" evidence="2">
    <location>
        <position position="185"/>
    </location>
    <ligand>
        <name>Zn(2+)</name>
        <dbReference type="ChEBI" id="CHEBI:29105"/>
    </ligand>
</feature>
<organism>
    <name type="scientific">Chlorobaculum tepidum (strain ATCC 49652 / DSM 12025 / NBRC 103806 / TLS)</name>
    <name type="common">Chlorobium tepidum</name>
    <dbReference type="NCBI Taxonomy" id="194439"/>
    <lineage>
        <taxon>Bacteria</taxon>
        <taxon>Pseudomonadati</taxon>
        <taxon>Chlorobiota</taxon>
        <taxon>Chlorobiia</taxon>
        <taxon>Chlorobiales</taxon>
        <taxon>Chlorobiaceae</taxon>
        <taxon>Chlorobaculum</taxon>
    </lineage>
</organism>